<name>LON_MYCAP</name>
<protein>
    <recommendedName>
        <fullName>Lon protease</fullName>
        <ecNumber>3.4.21.53</ecNumber>
    </recommendedName>
    <alternativeName>
        <fullName>ATP-dependent protease La</fullName>
    </alternativeName>
</protein>
<evidence type="ECO:0000250" key="1"/>
<evidence type="ECO:0000255" key="2">
    <source>
        <dbReference type="PROSITE-ProRule" id="PRU01122"/>
    </source>
</evidence>
<gene>
    <name type="primary">lon</name>
    <name type="ordered locus">MAG3630</name>
</gene>
<feature type="chain" id="PRO_0000396579" description="Lon protease">
    <location>
        <begin position="1"/>
        <end position="996"/>
    </location>
</feature>
<feature type="domain" description="Lon proteolytic" evidence="2">
    <location>
        <begin position="797"/>
        <end position="979"/>
    </location>
</feature>
<feature type="active site" evidence="1">
    <location>
        <position position="885"/>
    </location>
</feature>
<feature type="active site" evidence="1">
    <location>
        <position position="928"/>
    </location>
</feature>
<feature type="binding site" evidence="1">
    <location>
        <begin position="560"/>
        <end position="567"/>
    </location>
    <ligand>
        <name>ATP</name>
        <dbReference type="ChEBI" id="CHEBI:30616"/>
    </ligand>
</feature>
<proteinExistence type="inferred from homology"/>
<keyword id="KW-0067">ATP-binding</keyword>
<keyword id="KW-0963">Cytoplasm</keyword>
<keyword id="KW-0378">Hydrolase</keyword>
<keyword id="KW-0547">Nucleotide-binding</keyword>
<keyword id="KW-0645">Protease</keyword>
<keyword id="KW-1185">Reference proteome</keyword>
<keyword id="KW-0720">Serine protease</keyword>
<keyword id="KW-0346">Stress response</keyword>
<accession>A5IYF2</accession>
<sequence>MLFDREVAKLEITDELITQTTYWKQIIDEYTKDNSNGAEIINKARIMLVYYRPAEDNRVILESELQSKPTATYADVLENVNISNLDSNMTLCQVESVEKVYDNGSQKWHYIATLKAIHKYILQDIYGDEETISSSSIDIEKLPLKYIEGMVATRFGSENNGDEMALADPSLDFNGFEEVINTLIYDRNWNDAMLLYRYIRGYSAKEIRNWTKGTSEMMPDFINDDESRLETLVRALTGFFLLPPYELFTIYSMPSALHQFEALKSNFVLMVRLIKKFINELNLGNTDKLLNIYNALTDNELFKNSMEQIKENSELEVQFNYEVERIYKWHKEYLQLGYITEDDLKLIISLIEQNQNNLSKRSSKKDTSAMKDKIDKELNKKIQSNLDKQQKEFLLREKMKAIKEQLNEADDEDGDDEYSKIVNDPVLKQMYPEWIIKAIKTERDKLKNMMSSSPDANITQTYISNLKKLPWRKVEVENLDINRAREILDKNHYGLKEVKERVIEYLSLIINHRNINKESSEKDLIKIDDHNQIDLQLFKENTKNKAQKQFNNVPILTLVGPPGTGKTSLARSIAEALDKSYVKLSLGGLHDESEIRGHRKTYVGAMPGKIIKGLQSAGVSNPLILLDEIDKMSSDIKGDPTSAMLEVLDPEQNTKFQDNYIEHEYDLSKVLFIATANYYENIPAPLLDRVEIIELNSYTINEKIKIAKEHLVEVVLAQAGLKPDQFIIDDKALEFIIKHYTAEAGVRSLKRNLDKIARKIVTKIVSGEKIDKFVIDQNNIPELLGTPKISESEKEMQPQIGSVNGLAFTSIGGTTLQIEVSWFKSKQPGIRLTGQLKEVMQESAKIALSYVRANAEKFGIKNVDFDTTEIHVHVPEGAVPKDGPSAGVTFTTALISALAKIPVSQEVAMTGEITLRGKVLEIGGLKEKSFAAFKKGIKTVFIPKNNEKNLSDIPEEVKEAINFIPVSHYEQIWEHLFKGKKSDESETESKKKKQSK</sequence>
<reference key="1">
    <citation type="journal article" date="2007" name="PLoS Genet.">
        <title>Being pathogenic, plastic, and sexual while living with a nearly minimal bacterial genome.</title>
        <authorList>
            <person name="Sirand-Pugnet P."/>
            <person name="Lartigue C."/>
            <person name="Marenda M."/>
            <person name="Jacob D."/>
            <person name="Barre A."/>
            <person name="Barbe V."/>
            <person name="Schenowitz C."/>
            <person name="Mangenot S."/>
            <person name="Couloux A."/>
            <person name="Segurens B."/>
            <person name="de Daruvar A."/>
            <person name="Blanchard A."/>
            <person name="Citti C."/>
        </authorList>
    </citation>
    <scope>NUCLEOTIDE SEQUENCE [LARGE SCALE GENOMIC DNA]</scope>
    <source>
        <strain>NCTC 10123 / CIP 59.7 / PG2</strain>
    </source>
</reference>
<dbReference type="EC" id="3.4.21.53"/>
<dbReference type="EMBL" id="CU179680">
    <property type="protein sequence ID" value="CAL59061.1"/>
    <property type="molecule type" value="Genomic_DNA"/>
</dbReference>
<dbReference type="RefSeq" id="WP_011949536.1">
    <property type="nucleotide sequence ID" value="NC_009497.1"/>
</dbReference>
<dbReference type="SMR" id="A5IYF2"/>
<dbReference type="STRING" id="347257.MAG3630"/>
<dbReference type="GeneID" id="93358122"/>
<dbReference type="KEGG" id="maa:MAG3630"/>
<dbReference type="HOGENOM" id="CLU_004109_5_0_14"/>
<dbReference type="Proteomes" id="UP000007065">
    <property type="component" value="Chromosome"/>
</dbReference>
<dbReference type="GO" id="GO:0005737">
    <property type="term" value="C:cytoplasm"/>
    <property type="evidence" value="ECO:0007669"/>
    <property type="project" value="UniProtKB-SubCell"/>
</dbReference>
<dbReference type="GO" id="GO:0005524">
    <property type="term" value="F:ATP binding"/>
    <property type="evidence" value="ECO:0007669"/>
    <property type="project" value="UniProtKB-KW"/>
</dbReference>
<dbReference type="GO" id="GO:0016887">
    <property type="term" value="F:ATP hydrolysis activity"/>
    <property type="evidence" value="ECO:0007669"/>
    <property type="project" value="InterPro"/>
</dbReference>
<dbReference type="GO" id="GO:0004176">
    <property type="term" value="F:ATP-dependent peptidase activity"/>
    <property type="evidence" value="ECO:0007669"/>
    <property type="project" value="InterPro"/>
</dbReference>
<dbReference type="GO" id="GO:0004252">
    <property type="term" value="F:serine-type endopeptidase activity"/>
    <property type="evidence" value="ECO:0007669"/>
    <property type="project" value="UniProtKB-EC"/>
</dbReference>
<dbReference type="GO" id="GO:0030163">
    <property type="term" value="P:protein catabolic process"/>
    <property type="evidence" value="ECO:0007669"/>
    <property type="project" value="InterPro"/>
</dbReference>
<dbReference type="GO" id="GO:0006508">
    <property type="term" value="P:proteolysis"/>
    <property type="evidence" value="ECO:0007669"/>
    <property type="project" value="UniProtKB-KW"/>
</dbReference>
<dbReference type="CDD" id="cd19500">
    <property type="entry name" value="RecA-like_Lon"/>
    <property type="match status" value="1"/>
</dbReference>
<dbReference type="FunFam" id="3.40.50.300:FF:000021">
    <property type="entry name" value="Lon protease homolog"/>
    <property type="match status" value="1"/>
</dbReference>
<dbReference type="Gene3D" id="1.10.8.60">
    <property type="match status" value="1"/>
</dbReference>
<dbReference type="Gene3D" id="1.20.58.1480">
    <property type="match status" value="1"/>
</dbReference>
<dbReference type="Gene3D" id="3.30.230.10">
    <property type="match status" value="1"/>
</dbReference>
<dbReference type="Gene3D" id="3.40.50.300">
    <property type="entry name" value="P-loop containing nucleotide triphosphate hydrolases"/>
    <property type="match status" value="1"/>
</dbReference>
<dbReference type="InterPro" id="IPR003593">
    <property type="entry name" value="AAA+_ATPase"/>
</dbReference>
<dbReference type="InterPro" id="IPR003959">
    <property type="entry name" value="ATPase_AAA_core"/>
</dbReference>
<dbReference type="InterPro" id="IPR004815">
    <property type="entry name" value="Lon_bac/euk-typ"/>
</dbReference>
<dbReference type="InterPro" id="IPR054594">
    <property type="entry name" value="Lon_lid"/>
</dbReference>
<dbReference type="InterPro" id="IPR008269">
    <property type="entry name" value="Lon_proteolytic"/>
</dbReference>
<dbReference type="InterPro" id="IPR027065">
    <property type="entry name" value="Lon_Prtase"/>
</dbReference>
<dbReference type="InterPro" id="IPR027417">
    <property type="entry name" value="P-loop_NTPase"/>
</dbReference>
<dbReference type="InterPro" id="IPR020568">
    <property type="entry name" value="Ribosomal_Su5_D2-typ_SF"/>
</dbReference>
<dbReference type="InterPro" id="IPR014721">
    <property type="entry name" value="Ribsml_uS5_D2-typ_fold_subgr"/>
</dbReference>
<dbReference type="NCBIfam" id="TIGR00763">
    <property type="entry name" value="lon"/>
    <property type="match status" value="1"/>
</dbReference>
<dbReference type="PANTHER" id="PTHR10046">
    <property type="entry name" value="ATP DEPENDENT LON PROTEASE FAMILY MEMBER"/>
    <property type="match status" value="1"/>
</dbReference>
<dbReference type="Pfam" id="PF00004">
    <property type="entry name" value="AAA"/>
    <property type="match status" value="1"/>
</dbReference>
<dbReference type="Pfam" id="PF05362">
    <property type="entry name" value="Lon_C"/>
    <property type="match status" value="1"/>
</dbReference>
<dbReference type="Pfam" id="PF22667">
    <property type="entry name" value="Lon_lid"/>
    <property type="match status" value="1"/>
</dbReference>
<dbReference type="PRINTS" id="PR00830">
    <property type="entry name" value="ENDOLAPTASE"/>
</dbReference>
<dbReference type="SMART" id="SM00382">
    <property type="entry name" value="AAA"/>
    <property type="match status" value="1"/>
</dbReference>
<dbReference type="SUPFAM" id="SSF52540">
    <property type="entry name" value="P-loop containing nucleoside triphosphate hydrolases"/>
    <property type="match status" value="1"/>
</dbReference>
<dbReference type="SUPFAM" id="SSF54211">
    <property type="entry name" value="Ribosomal protein S5 domain 2-like"/>
    <property type="match status" value="1"/>
</dbReference>
<dbReference type="PROSITE" id="PS51786">
    <property type="entry name" value="LON_PROTEOLYTIC"/>
    <property type="match status" value="1"/>
</dbReference>
<organism>
    <name type="scientific">Mycoplasmopsis agalactiae (strain NCTC 10123 / CIP 59.7 / PG2)</name>
    <name type="common">Mycoplasma agalactiae</name>
    <dbReference type="NCBI Taxonomy" id="347257"/>
    <lineage>
        <taxon>Bacteria</taxon>
        <taxon>Bacillati</taxon>
        <taxon>Mycoplasmatota</taxon>
        <taxon>Mycoplasmoidales</taxon>
        <taxon>Metamycoplasmataceae</taxon>
        <taxon>Mycoplasmopsis</taxon>
    </lineage>
</organism>
<comment type="function">
    <text evidence="1">ATP-dependent serine protease that mediates the selective degradation of mutant and abnormal proteins as well as certain short-lived regulatory proteins. Required for cellular homeostasis and for survival from DNA damage and developmental changes induced by stress. Degrades polypeptides processively to yield small peptide fragments that are 5 to 10 amino acids long. Binds to DNA in a double-stranded, site-specific manner (By similarity).</text>
</comment>
<comment type="catalytic activity">
    <reaction>
        <text>Hydrolysis of proteins in presence of ATP.</text>
        <dbReference type="EC" id="3.4.21.53"/>
    </reaction>
</comment>
<comment type="subunit">
    <text evidence="1">Homohexamer. Organized in a ring with a central cavity (By similarity).</text>
</comment>
<comment type="subcellular location">
    <subcellularLocation>
        <location evidence="1">Cytoplasm</location>
    </subcellularLocation>
</comment>
<comment type="induction">
    <text evidence="1">By heat shock.</text>
</comment>
<comment type="similarity">
    <text evidence="2">Belongs to the peptidase S16 family.</text>
</comment>